<gene>
    <name type="primary">TPS8</name>
    <name type="ORF">RCOM_0866620</name>
</gene>
<evidence type="ECO:0000250" key="1"/>
<evidence type="ECO:0000305" key="2"/>
<evidence type="ECO:0000305" key="3">
    <source>
    </source>
</evidence>
<sequence>MAAEAKNDEQQDIARRLAKFPSTIWGCSFASFSLKDSEIESYTQQVEELKGKVKDMLMQSTKEITQNIEVINLLCRLGVSYHFESEIEQQLNLIFASLPSFLNDNGHLDLYTVALLFRVLRQHGRKVPCDVFNKYKDDNGEFKKDITSDVKGLLSLYEASVVSVHGEEILDEALVFTKQHLETLAAQVSPHFEQHIRNALLCPVHYGMERLQARLYISFYEEDESRNEILLKFAKLDFNRLQLLYREELAIVSRWWKDLDLTERLSYARDRIVEVYVWALGCVGSQPQFASSRLLVAKFTQTAMTVDDTYDAYGTIGELRLFTAAFERCSIDAIHELPEYMQYLYKAILKLFEETENDANEGSSYKTSYAKEMFKELTRADLQEGEWFNSLYVPAFDEYLHNASITTTGELLTAAFLLGLKEASMKEIVWVRDAPKIVRNAKLFARLLDDVATHEEEQKRGDCPSSVECYMNEYGVPKEKAYEEIKKILATSWKDINEDYMKQHRVSRTVVNYFINFARMSNFVYKVRDAYTYSTHLKTYVATLFLQPLPV</sequence>
<dbReference type="EC" id="4.2.3.-"/>
<dbReference type="EMBL" id="EQ973844">
    <property type="protein sequence ID" value="EEF42501.1"/>
    <property type="molecule type" value="Genomic_DNA"/>
</dbReference>
<dbReference type="SMR" id="B9S1N2"/>
<dbReference type="STRING" id="3988.B9S1N2"/>
<dbReference type="InParanoid" id="B9S1N2"/>
<dbReference type="OMA" id="YSRGRIH"/>
<dbReference type="OrthoDB" id="819893at2759"/>
<dbReference type="Proteomes" id="UP000008311">
    <property type="component" value="Unassembled WGS sequence"/>
</dbReference>
<dbReference type="GO" id="GO:0000287">
    <property type="term" value="F:magnesium ion binding"/>
    <property type="evidence" value="ECO:0007669"/>
    <property type="project" value="InterPro"/>
</dbReference>
<dbReference type="GO" id="GO:0010333">
    <property type="term" value="F:terpene synthase activity"/>
    <property type="evidence" value="ECO:0007669"/>
    <property type="project" value="InterPro"/>
</dbReference>
<dbReference type="GO" id="GO:0016102">
    <property type="term" value="P:diterpenoid biosynthetic process"/>
    <property type="evidence" value="ECO:0007669"/>
    <property type="project" value="InterPro"/>
</dbReference>
<dbReference type="GO" id="GO:0120251">
    <property type="term" value="P:hydrocarbon biosynthetic process"/>
    <property type="evidence" value="ECO:0007669"/>
    <property type="project" value="UniProtKB-ARBA"/>
</dbReference>
<dbReference type="CDD" id="cd00684">
    <property type="entry name" value="Terpene_cyclase_plant_C1"/>
    <property type="match status" value="1"/>
</dbReference>
<dbReference type="FunFam" id="1.10.600.10:FF:000007">
    <property type="entry name" value="Isoprene synthase, chloroplastic"/>
    <property type="match status" value="1"/>
</dbReference>
<dbReference type="FunFam" id="1.50.10.130:FF:000001">
    <property type="entry name" value="Isoprene synthase, chloroplastic"/>
    <property type="match status" value="1"/>
</dbReference>
<dbReference type="Gene3D" id="1.10.600.10">
    <property type="entry name" value="Farnesyl Diphosphate Synthase"/>
    <property type="match status" value="1"/>
</dbReference>
<dbReference type="Gene3D" id="1.50.10.130">
    <property type="entry name" value="Terpene synthase, N-terminal domain"/>
    <property type="match status" value="1"/>
</dbReference>
<dbReference type="InterPro" id="IPR008949">
    <property type="entry name" value="Isoprenoid_synthase_dom_sf"/>
</dbReference>
<dbReference type="InterPro" id="IPR034741">
    <property type="entry name" value="Terpene_cyclase-like_1_C"/>
</dbReference>
<dbReference type="InterPro" id="IPR044814">
    <property type="entry name" value="Terpene_cyclase_plant_C1"/>
</dbReference>
<dbReference type="InterPro" id="IPR001906">
    <property type="entry name" value="Terpene_synth_N"/>
</dbReference>
<dbReference type="InterPro" id="IPR036965">
    <property type="entry name" value="Terpene_synth_N_sf"/>
</dbReference>
<dbReference type="InterPro" id="IPR050148">
    <property type="entry name" value="Terpene_synthase-like"/>
</dbReference>
<dbReference type="InterPro" id="IPR005630">
    <property type="entry name" value="Terpene_synthase_metal-bd"/>
</dbReference>
<dbReference type="InterPro" id="IPR008930">
    <property type="entry name" value="Terpenoid_cyclase/PrenylTrfase"/>
</dbReference>
<dbReference type="PANTHER" id="PTHR31225">
    <property type="entry name" value="OS04G0344100 PROTEIN-RELATED"/>
    <property type="match status" value="1"/>
</dbReference>
<dbReference type="PANTHER" id="PTHR31225:SF231">
    <property type="entry name" value="TERPENE SYNTHASE 6-RELATED"/>
    <property type="match status" value="1"/>
</dbReference>
<dbReference type="Pfam" id="PF01397">
    <property type="entry name" value="Terpene_synth"/>
    <property type="match status" value="1"/>
</dbReference>
<dbReference type="Pfam" id="PF03936">
    <property type="entry name" value="Terpene_synth_C"/>
    <property type="match status" value="1"/>
</dbReference>
<dbReference type="SFLD" id="SFLDS00005">
    <property type="entry name" value="Isoprenoid_Synthase_Type_I"/>
    <property type="match status" value="1"/>
</dbReference>
<dbReference type="SFLD" id="SFLDG01019">
    <property type="entry name" value="Terpene_Cyclase_Like_1_C_Termi"/>
    <property type="match status" value="1"/>
</dbReference>
<dbReference type="SUPFAM" id="SSF48239">
    <property type="entry name" value="Terpenoid cyclases/Protein prenyltransferases"/>
    <property type="match status" value="1"/>
</dbReference>
<dbReference type="SUPFAM" id="SSF48576">
    <property type="entry name" value="Terpenoid synthases"/>
    <property type="match status" value="1"/>
</dbReference>
<organism>
    <name type="scientific">Ricinus communis</name>
    <name type="common">Castor bean</name>
    <dbReference type="NCBI Taxonomy" id="3988"/>
    <lineage>
        <taxon>Eukaryota</taxon>
        <taxon>Viridiplantae</taxon>
        <taxon>Streptophyta</taxon>
        <taxon>Embryophyta</taxon>
        <taxon>Tracheophyta</taxon>
        <taxon>Spermatophyta</taxon>
        <taxon>Magnoliopsida</taxon>
        <taxon>eudicotyledons</taxon>
        <taxon>Gunneridae</taxon>
        <taxon>Pentapetalae</taxon>
        <taxon>rosids</taxon>
        <taxon>fabids</taxon>
        <taxon>Malpighiales</taxon>
        <taxon>Euphorbiaceae</taxon>
        <taxon>Acalyphoideae</taxon>
        <taxon>Acalypheae</taxon>
        <taxon>Ricinus</taxon>
    </lineage>
</organism>
<proteinExistence type="inferred from homology"/>
<feature type="chain" id="PRO_0000422206" description="Probable terpene synthase 8">
    <location>
        <begin position="1"/>
        <end position="551"/>
    </location>
</feature>
<feature type="short sequence motif" description="DDXXD motif">
    <location>
        <begin position="307"/>
        <end position="311"/>
    </location>
</feature>
<feature type="binding site" evidence="1">
    <location>
        <position position="307"/>
    </location>
    <ligand>
        <name>Mg(2+)</name>
        <dbReference type="ChEBI" id="CHEBI:18420"/>
        <label>1</label>
    </ligand>
</feature>
<feature type="binding site" evidence="1">
    <location>
        <position position="307"/>
    </location>
    <ligand>
        <name>Mg(2+)</name>
        <dbReference type="ChEBI" id="CHEBI:18420"/>
        <label>2</label>
    </ligand>
</feature>
<feature type="binding site" evidence="1">
    <location>
        <position position="311"/>
    </location>
    <ligand>
        <name>Mg(2+)</name>
        <dbReference type="ChEBI" id="CHEBI:18420"/>
        <label>1</label>
    </ligand>
</feature>
<feature type="binding site" evidence="1">
    <location>
        <position position="311"/>
    </location>
    <ligand>
        <name>Mg(2+)</name>
        <dbReference type="ChEBI" id="CHEBI:18420"/>
        <label>2</label>
    </ligand>
</feature>
<feature type="binding site" evidence="1">
    <location>
        <position position="457"/>
    </location>
    <ligand>
        <name>Mg(2+)</name>
        <dbReference type="ChEBI" id="CHEBI:18420"/>
        <label>3</label>
    </ligand>
</feature>
<accession>B9S1N2</accession>
<name>TPS8_RICCO</name>
<protein>
    <recommendedName>
        <fullName>Probable terpene synthase 8</fullName>
        <shortName>RcSeTPS8</shortName>
        <ecNumber>4.2.3.-</ecNumber>
    </recommendedName>
</protein>
<comment type="function">
    <text evidence="1">Probable sesquiterpene synthase.</text>
</comment>
<comment type="cofactor">
    <cofactor evidence="1">
        <name>Mg(2+)</name>
        <dbReference type="ChEBI" id="CHEBI:18420"/>
    </cofactor>
    <text evidence="1">Binds 3 Mg(2+) ions per subunit.</text>
</comment>
<comment type="domain">
    <text evidence="1">The Asp-Asp-Xaa-Xaa-Asp/Glu (DDXXD/E) motif is important for the catalytic activity, presumably through binding to Mg(2+).</text>
</comment>
<comment type="miscellaneous">
    <text evidence="3">Does not produce any detectable product when tested in vitro.</text>
</comment>
<comment type="similarity">
    <text evidence="2">Belongs to the terpene synthase family.</text>
</comment>
<keyword id="KW-0456">Lyase</keyword>
<keyword id="KW-0460">Magnesium</keyword>
<keyword id="KW-0479">Metal-binding</keyword>
<keyword id="KW-1185">Reference proteome</keyword>
<reference key="1">
    <citation type="journal article" date="2010" name="Nat. Biotechnol.">
        <title>Draft genome sequence of the oilseed species Ricinus communis.</title>
        <authorList>
            <person name="Chan A.P."/>
            <person name="Crabtree J."/>
            <person name="Zhao Q."/>
            <person name="Lorenzi H."/>
            <person name="Orvis J."/>
            <person name="Puiu D."/>
            <person name="Melake-Berhan A."/>
            <person name="Jones K.M."/>
            <person name="Redman J."/>
            <person name="Chen G."/>
            <person name="Cahoon E.B."/>
            <person name="Gedil M."/>
            <person name="Stanke M."/>
            <person name="Haas B.J."/>
            <person name="Wortman J.R."/>
            <person name="Fraser-Liggett C.M."/>
            <person name="Ravel J."/>
            <person name="Rabinowicz P.D."/>
        </authorList>
    </citation>
    <scope>NUCLEOTIDE SEQUENCE [LARGE SCALE GENOMIC DNA]</scope>
    <source>
        <strain>cv. Hale</strain>
    </source>
</reference>
<reference key="2">
    <citation type="journal article" date="2012" name="Phytochemistry">
        <title>Functional characterization of four sesquiterpene synthases from Ricinus communis (castor bean).</title>
        <authorList>
            <person name="Xie X."/>
            <person name="Kirby J."/>
            <person name="Keasling J.D."/>
        </authorList>
    </citation>
    <scope>GENE NAME</scope>
</reference>